<gene>
    <name evidence="1" type="primary">lig</name>
    <name type="ordered locus">SSO0189</name>
</gene>
<dbReference type="EC" id="6.5.1.1" evidence="1"/>
<dbReference type="EMBL" id="AE006641">
    <property type="protein sequence ID" value="AAK40535.1"/>
    <property type="molecule type" value="Genomic_DNA"/>
</dbReference>
<dbReference type="PIR" id="H90159">
    <property type="entry name" value="H90159"/>
</dbReference>
<dbReference type="RefSeq" id="WP_009990427.1">
    <property type="nucleotide sequence ID" value="NC_002754.1"/>
</dbReference>
<dbReference type="PDB" id="2HIV">
    <property type="method" value="X-ray"/>
    <property type="resolution" value="2.05 A"/>
    <property type="chains" value="A=1-601"/>
</dbReference>
<dbReference type="PDB" id="2HIX">
    <property type="method" value="X-ray"/>
    <property type="resolution" value="2.87 A"/>
    <property type="chains" value="A=1-601"/>
</dbReference>
<dbReference type="PDB" id="7RPO">
    <property type="method" value="EM"/>
    <property type="resolution" value="4.16 A"/>
    <property type="chains" value="E=1-601"/>
</dbReference>
<dbReference type="PDB" id="7RPW">
    <property type="method" value="EM"/>
    <property type="resolution" value="4.38 A"/>
    <property type="chains" value="E=1-601"/>
</dbReference>
<dbReference type="PDB" id="7RPX">
    <property type="method" value="EM"/>
    <property type="resolution" value="4.20 A"/>
    <property type="chains" value="E=1-601"/>
</dbReference>
<dbReference type="PDBsum" id="2HIV"/>
<dbReference type="PDBsum" id="2HIX"/>
<dbReference type="PDBsum" id="7RPO"/>
<dbReference type="PDBsum" id="7RPW"/>
<dbReference type="PDBsum" id="7RPX"/>
<dbReference type="EMDB" id="EMD-24618"/>
<dbReference type="EMDB" id="EMD-24624"/>
<dbReference type="EMDB" id="EMD-24625"/>
<dbReference type="SMR" id="Q980T8"/>
<dbReference type="FunCoup" id="Q980T8">
    <property type="interactions" value="157"/>
</dbReference>
<dbReference type="STRING" id="273057.SSO0189"/>
<dbReference type="PaxDb" id="273057-SSO0189"/>
<dbReference type="EnsemblBacteria" id="AAK40535">
    <property type="protein sequence ID" value="AAK40535"/>
    <property type="gene ID" value="SSO0189"/>
</dbReference>
<dbReference type="KEGG" id="sso:SSO0189"/>
<dbReference type="PATRIC" id="fig|273057.12.peg.188"/>
<dbReference type="eggNOG" id="arCOG01347">
    <property type="taxonomic scope" value="Archaea"/>
</dbReference>
<dbReference type="HOGENOM" id="CLU_005138_6_0_2"/>
<dbReference type="InParanoid" id="Q980T8"/>
<dbReference type="PhylomeDB" id="Q980T8"/>
<dbReference type="BRENDA" id="6.5.1.1">
    <property type="organism ID" value="6163"/>
</dbReference>
<dbReference type="EvolutionaryTrace" id="Q980T8"/>
<dbReference type="Proteomes" id="UP000001974">
    <property type="component" value="Chromosome"/>
</dbReference>
<dbReference type="GO" id="GO:0005524">
    <property type="term" value="F:ATP binding"/>
    <property type="evidence" value="ECO:0007669"/>
    <property type="project" value="UniProtKB-UniRule"/>
</dbReference>
<dbReference type="GO" id="GO:0003677">
    <property type="term" value="F:DNA binding"/>
    <property type="evidence" value="ECO:0007669"/>
    <property type="project" value="InterPro"/>
</dbReference>
<dbReference type="GO" id="GO:0003910">
    <property type="term" value="F:DNA ligase (ATP) activity"/>
    <property type="evidence" value="ECO:0000318"/>
    <property type="project" value="GO_Central"/>
</dbReference>
<dbReference type="GO" id="GO:0046872">
    <property type="term" value="F:metal ion binding"/>
    <property type="evidence" value="ECO:0007669"/>
    <property type="project" value="UniProtKB-KW"/>
</dbReference>
<dbReference type="GO" id="GO:0051301">
    <property type="term" value="P:cell division"/>
    <property type="evidence" value="ECO:0007669"/>
    <property type="project" value="UniProtKB-KW"/>
</dbReference>
<dbReference type="GO" id="GO:0071897">
    <property type="term" value="P:DNA biosynthetic process"/>
    <property type="evidence" value="ECO:0007669"/>
    <property type="project" value="InterPro"/>
</dbReference>
<dbReference type="GO" id="GO:0006310">
    <property type="term" value="P:DNA recombination"/>
    <property type="evidence" value="ECO:0007669"/>
    <property type="project" value="UniProtKB-UniRule"/>
</dbReference>
<dbReference type="GO" id="GO:0006281">
    <property type="term" value="P:DNA repair"/>
    <property type="evidence" value="ECO:0007669"/>
    <property type="project" value="UniProtKB-UniRule"/>
</dbReference>
<dbReference type="GO" id="GO:0006273">
    <property type="term" value="P:lagging strand elongation"/>
    <property type="evidence" value="ECO:0000318"/>
    <property type="project" value="GO_Central"/>
</dbReference>
<dbReference type="CDD" id="cd07901">
    <property type="entry name" value="Adenylation_DNA_ligase_Arch_LigB"/>
    <property type="match status" value="1"/>
</dbReference>
<dbReference type="CDD" id="cd07969">
    <property type="entry name" value="OBF_DNA_ligase_I"/>
    <property type="match status" value="1"/>
</dbReference>
<dbReference type="FunFam" id="1.10.3260.10:FF:000007">
    <property type="entry name" value="DNA ligase"/>
    <property type="match status" value="1"/>
</dbReference>
<dbReference type="FunFam" id="2.40.50.140:FF:000062">
    <property type="entry name" value="DNA ligase"/>
    <property type="match status" value="1"/>
</dbReference>
<dbReference type="FunFam" id="3.30.470.30:FF:000012">
    <property type="entry name" value="Probable DNA ligase"/>
    <property type="match status" value="1"/>
</dbReference>
<dbReference type="Gene3D" id="1.10.3260.10">
    <property type="entry name" value="DNA ligase, ATP-dependent, N-terminal domain"/>
    <property type="match status" value="1"/>
</dbReference>
<dbReference type="Gene3D" id="3.30.470.30">
    <property type="entry name" value="DNA ligase/mRNA capping enzyme"/>
    <property type="match status" value="1"/>
</dbReference>
<dbReference type="Gene3D" id="2.40.50.140">
    <property type="entry name" value="Nucleic acid-binding proteins"/>
    <property type="match status" value="1"/>
</dbReference>
<dbReference type="HAMAP" id="MF_00407">
    <property type="entry name" value="DNA_ligase"/>
    <property type="match status" value="1"/>
</dbReference>
<dbReference type="InterPro" id="IPR050191">
    <property type="entry name" value="ATP-dep_DNA_ligase"/>
</dbReference>
<dbReference type="InterPro" id="IPR022865">
    <property type="entry name" value="DNA_ligae_ATP-dep_bac/arc"/>
</dbReference>
<dbReference type="InterPro" id="IPR000977">
    <property type="entry name" value="DNA_ligase_ATP-dep"/>
</dbReference>
<dbReference type="InterPro" id="IPR012309">
    <property type="entry name" value="DNA_ligase_ATP-dep_C"/>
</dbReference>
<dbReference type="InterPro" id="IPR012310">
    <property type="entry name" value="DNA_ligase_ATP-dep_cent"/>
</dbReference>
<dbReference type="InterPro" id="IPR016059">
    <property type="entry name" value="DNA_ligase_ATP-dep_CS"/>
</dbReference>
<dbReference type="InterPro" id="IPR012308">
    <property type="entry name" value="DNA_ligase_ATP-dep_N"/>
</dbReference>
<dbReference type="InterPro" id="IPR036599">
    <property type="entry name" value="DNA_ligase_N_sf"/>
</dbReference>
<dbReference type="InterPro" id="IPR012340">
    <property type="entry name" value="NA-bd_OB-fold"/>
</dbReference>
<dbReference type="NCBIfam" id="TIGR00574">
    <property type="entry name" value="dnl1"/>
    <property type="match status" value="1"/>
</dbReference>
<dbReference type="PANTHER" id="PTHR45674:SF4">
    <property type="entry name" value="DNA LIGASE 1"/>
    <property type="match status" value="1"/>
</dbReference>
<dbReference type="PANTHER" id="PTHR45674">
    <property type="entry name" value="DNA LIGASE 1/3 FAMILY MEMBER"/>
    <property type="match status" value="1"/>
</dbReference>
<dbReference type="Pfam" id="PF04679">
    <property type="entry name" value="DNA_ligase_A_C"/>
    <property type="match status" value="1"/>
</dbReference>
<dbReference type="Pfam" id="PF01068">
    <property type="entry name" value="DNA_ligase_A_M"/>
    <property type="match status" value="1"/>
</dbReference>
<dbReference type="Pfam" id="PF04675">
    <property type="entry name" value="DNA_ligase_A_N"/>
    <property type="match status" value="1"/>
</dbReference>
<dbReference type="SUPFAM" id="SSF117018">
    <property type="entry name" value="ATP-dependent DNA ligase DNA-binding domain"/>
    <property type="match status" value="1"/>
</dbReference>
<dbReference type="SUPFAM" id="SSF56091">
    <property type="entry name" value="DNA ligase/mRNA capping enzyme, catalytic domain"/>
    <property type="match status" value="1"/>
</dbReference>
<dbReference type="SUPFAM" id="SSF50249">
    <property type="entry name" value="Nucleic acid-binding proteins"/>
    <property type="match status" value="1"/>
</dbReference>
<dbReference type="PROSITE" id="PS00697">
    <property type="entry name" value="DNA_LIGASE_A1"/>
    <property type="match status" value="1"/>
</dbReference>
<dbReference type="PROSITE" id="PS00333">
    <property type="entry name" value="DNA_LIGASE_A2"/>
    <property type="match status" value="1"/>
</dbReference>
<dbReference type="PROSITE" id="PS50160">
    <property type="entry name" value="DNA_LIGASE_A3"/>
    <property type="match status" value="1"/>
</dbReference>
<organism>
    <name type="scientific">Saccharolobus solfataricus (strain ATCC 35092 / DSM 1617 / JCM 11322 / P2)</name>
    <name type="common">Sulfolobus solfataricus</name>
    <dbReference type="NCBI Taxonomy" id="273057"/>
    <lineage>
        <taxon>Archaea</taxon>
        <taxon>Thermoproteota</taxon>
        <taxon>Thermoprotei</taxon>
        <taxon>Sulfolobales</taxon>
        <taxon>Sulfolobaceae</taxon>
        <taxon>Saccharolobus</taxon>
    </lineage>
</organism>
<accession>Q980T8</accession>
<proteinExistence type="evidence at protein level"/>
<sequence>MEFKVIAEYFDKLEKISSRLQLTALLADLLSKSDKTIIDKVVYIIQGKLWPDFLGYPELGIGEKFLIKAISIATNTDENSVENLYKTIGDLGEVARRLKSKQQSTGILGFLGTTSKESLTVDEVYSTLSKVALTTGEGSRDLKIRLLAGLLKKADPLEAKFLVRFVEGRLRVGIGDATVLDAMAIAFGGGQSASEIIERAYNLRADLGNIAKIIVEKGIEALKTLKPQVGIPIRPMLAERLSNPEEILKKMGGNAIVDYKYDGERAQIHKKEDKIFIFSRRLENITSQYPDVVDYVSKYIEGKEFIIEGEIVAIDPESGEMRPFQELMHRKRKSDIYEAIKEYPVNVFLFDLMYYEDVDYTTKPLEARRKLLESIVKPNDYVKIAHHIQANNVEDLKSFFYRAISEGGEGVMVKAIGKDAIYQAGARGWLWIKLKRDYQSEMADTVDLVVVGGFYGKGKRGGKISSLLMAAYNPKTDSFESVCKVASGFSDEQLDELQKKLMEIKRDVKHPRVNSKMEPDIWVEPVYVAEIIGSEITISPLHTCCQDVVEKDAGLSIRFPRFIRWRDDKSPEDATTTDEILEMYNKQPKKKIESPAVDESV</sequence>
<protein>
    <recommendedName>
        <fullName evidence="1">DNA ligase</fullName>
        <ecNumber evidence="1">6.5.1.1</ecNumber>
    </recommendedName>
    <alternativeName>
        <fullName evidence="1">Polydeoxyribonucleotide synthase [ATP]</fullName>
    </alternativeName>
</protein>
<keyword id="KW-0002">3D-structure</keyword>
<keyword id="KW-0067">ATP-binding</keyword>
<keyword id="KW-0131">Cell cycle</keyword>
<keyword id="KW-0132">Cell division</keyword>
<keyword id="KW-0903">Direct protein sequencing</keyword>
<keyword id="KW-0227">DNA damage</keyword>
<keyword id="KW-0233">DNA recombination</keyword>
<keyword id="KW-0234">DNA repair</keyword>
<keyword id="KW-0235">DNA replication</keyword>
<keyword id="KW-0436">Ligase</keyword>
<keyword id="KW-0460">Magnesium</keyword>
<keyword id="KW-0479">Metal-binding</keyword>
<keyword id="KW-0547">Nucleotide-binding</keyword>
<keyword id="KW-1185">Reference proteome</keyword>
<comment type="function">
    <text evidence="2">DNA ligase that seals nicks in double-stranded DNA during DNA replication, DNA recombination and DNA repair. Interaction with PCNA enhances ligase activity. DNA polymerase I, DNA ligase and the flap endonuclease may be constitutively associated with the PCNA heterotrimer forming a scanning complex able to couple DNA synthesis and Okazaki fragment maturation.</text>
</comment>
<comment type="catalytic activity">
    <reaction evidence="1">
        <text>ATP + (deoxyribonucleotide)n-3'-hydroxyl + 5'-phospho-(deoxyribonucleotide)m = (deoxyribonucleotide)n+m + AMP + diphosphate.</text>
        <dbReference type="EC" id="6.5.1.1"/>
    </reaction>
</comment>
<comment type="cofactor">
    <cofactor evidence="3">
        <name>a divalent metal cation</name>
        <dbReference type="ChEBI" id="CHEBI:60240"/>
    </cofactor>
</comment>
<comment type="activity regulation">
    <text evidence="2">Ligase activity stimulated by PCNA heterotrimer.</text>
</comment>
<comment type="subunit">
    <text evidence="2 3">Interacts with the PCNA heterotrimer, probably via subunit PCNA3.</text>
</comment>
<comment type="similarity">
    <text evidence="1">Belongs to the ATP-dependent DNA ligase family.</text>
</comment>
<evidence type="ECO:0000255" key="1">
    <source>
        <dbReference type="HAMAP-Rule" id="MF_00407"/>
    </source>
</evidence>
<evidence type="ECO:0000269" key="2">
    <source>
    </source>
</evidence>
<evidence type="ECO:0000269" key="3">
    <source>
    </source>
</evidence>
<evidence type="ECO:0007829" key="4">
    <source>
        <dbReference type="PDB" id="2HIV"/>
    </source>
</evidence>
<evidence type="ECO:0007829" key="5">
    <source>
        <dbReference type="PDB" id="2HIX"/>
    </source>
</evidence>
<feature type="chain" id="PRO_0000059618" description="DNA ligase">
    <location>
        <begin position="1"/>
        <end position="601"/>
    </location>
</feature>
<feature type="active site" description="N6-AMP-lysine intermediate">
    <location>
        <position position="260"/>
    </location>
</feature>
<feature type="binding site">
    <location>
        <position position="258"/>
    </location>
    <ligand>
        <name>ATP</name>
        <dbReference type="ChEBI" id="CHEBI:30616"/>
    </ligand>
</feature>
<feature type="binding site">
    <location>
        <position position="265"/>
    </location>
    <ligand>
        <name>ATP</name>
        <dbReference type="ChEBI" id="CHEBI:30616"/>
    </ligand>
</feature>
<feature type="binding site">
    <location>
        <position position="280"/>
    </location>
    <ligand>
        <name>ATP</name>
        <dbReference type="ChEBI" id="CHEBI:30616"/>
    </ligand>
</feature>
<feature type="binding site" evidence="1">
    <location>
        <position position="310"/>
    </location>
    <ligand>
        <name>ATP</name>
        <dbReference type="ChEBI" id="CHEBI:30616"/>
    </ligand>
</feature>
<feature type="binding site" evidence="1">
    <location>
        <position position="350"/>
    </location>
    <ligand>
        <name>ATP</name>
        <dbReference type="ChEBI" id="CHEBI:30616"/>
    </ligand>
</feature>
<feature type="binding site">
    <location>
        <position position="427"/>
    </location>
    <ligand>
        <name>ATP</name>
        <dbReference type="ChEBI" id="CHEBI:30616"/>
    </ligand>
</feature>
<feature type="binding site">
    <location>
        <position position="433"/>
    </location>
    <ligand>
        <name>ATP</name>
        <dbReference type="ChEBI" id="CHEBI:30616"/>
    </ligand>
</feature>
<feature type="mutagenesis site" description="No interaction with PCNA3, no stimulation by PCNA heterotrimer." evidence="2">
    <location>
        <begin position="1"/>
        <end position="30"/>
    </location>
</feature>
<feature type="mutagenesis site" description="Impairs interaction with PCNA." evidence="3">
    <original>FL</original>
    <variation>AA</variation>
    <location>
        <begin position="110"/>
        <end position="111"/>
    </location>
</feature>
<feature type="helix" evidence="4">
    <location>
        <begin position="4"/>
        <end position="15"/>
    </location>
</feature>
<feature type="helix" evidence="4">
    <location>
        <begin position="19"/>
        <end position="31"/>
    </location>
</feature>
<feature type="helix" evidence="4">
    <location>
        <begin position="35"/>
        <end position="37"/>
    </location>
</feature>
<feature type="helix" evidence="4">
    <location>
        <begin position="38"/>
        <end position="44"/>
    </location>
</feature>
<feature type="turn" evidence="4">
    <location>
        <begin position="45"/>
        <end position="47"/>
    </location>
</feature>
<feature type="helix" evidence="4">
    <location>
        <begin position="52"/>
        <end position="54"/>
    </location>
</feature>
<feature type="helix" evidence="4">
    <location>
        <begin position="63"/>
        <end position="74"/>
    </location>
</feature>
<feature type="helix" evidence="4">
    <location>
        <begin position="78"/>
        <end position="88"/>
    </location>
</feature>
<feature type="helix" evidence="4">
    <location>
        <begin position="91"/>
        <end position="100"/>
    </location>
</feature>
<feature type="helix" evidence="4">
    <location>
        <begin position="121"/>
        <end position="133"/>
    </location>
</feature>
<feature type="helix" evidence="4">
    <location>
        <begin position="139"/>
        <end position="153"/>
    </location>
</feature>
<feature type="helix" evidence="4">
    <location>
        <begin position="156"/>
        <end position="166"/>
    </location>
</feature>
<feature type="helix" evidence="4">
    <location>
        <begin position="176"/>
        <end position="187"/>
    </location>
</feature>
<feature type="strand" evidence="4">
    <location>
        <begin position="188"/>
        <end position="190"/>
    </location>
</feature>
<feature type="helix" evidence="4">
    <location>
        <begin position="191"/>
        <end position="193"/>
    </location>
</feature>
<feature type="helix" evidence="4">
    <location>
        <begin position="194"/>
        <end position="203"/>
    </location>
</feature>
<feature type="helix" evidence="4">
    <location>
        <begin position="207"/>
        <end position="217"/>
    </location>
</feature>
<feature type="helix" evidence="4">
    <location>
        <begin position="219"/>
        <end position="222"/>
    </location>
</feature>
<feature type="strand" evidence="4">
    <location>
        <begin position="237"/>
        <end position="240"/>
    </location>
</feature>
<feature type="helix" evidence="4">
    <location>
        <begin position="244"/>
        <end position="250"/>
    </location>
</feature>
<feature type="turn" evidence="4">
    <location>
        <begin position="251"/>
        <end position="253"/>
    </location>
</feature>
<feature type="strand" evidence="4">
    <location>
        <begin position="255"/>
        <end position="260"/>
    </location>
</feature>
<feature type="strand" evidence="4">
    <location>
        <begin position="262"/>
        <end position="271"/>
    </location>
</feature>
<feature type="strand" evidence="4">
    <location>
        <begin position="274"/>
        <end position="278"/>
    </location>
</feature>
<feature type="helix" evidence="4">
    <location>
        <begin position="286"/>
        <end position="288"/>
    </location>
</feature>
<feature type="helix" evidence="4">
    <location>
        <begin position="290"/>
        <end position="299"/>
    </location>
</feature>
<feature type="strand" evidence="4">
    <location>
        <begin position="303"/>
        <end position="314"/>
    </location>
</feature>
<feature type="turn" evidence="4">
    <location>
        <begin position="316"/>
        <end position="318"/>
    </location>
</feature>
<feature type="helix" evidence="4">
    <location>
        <begin position="325"/>
        <end position="332"/>
    </location>
</feature>
<feature type="helix" evidence="4">
    <location>
        <begin position="336"/>
        <end position="342"/>
    </location>
</feature>
<feature type="strand" evidence="4">
    <location>
        <begin position="345"/>
        <end position="355"/>
    </location>
</feature>
<feature type="helix" evidence="4">
    <location>
        <begin position="365"/>
        <end position="375"/>
    </location>
</feature>
<feature type="strand" evidence="4">
    <location>
        <begin position="380"/>
        <end position="384"/>
    </location>
</feature>
<feature type="strand" evidence="4">
    <location>
        <begin position="387"/>
        <end position="392"/>
    </location>
</feature>
<feature type="helix" evidence="4">
    <location>
        <begin position="393"/>
        <end position="405"/>
    </location>
</feature>
<feature type="strand" evidence="4">
    <location>
        <begin position="410"/>
        <end position="414"/>
    </location>
</feature>
<feature type="strand" evidence="4">
    <location>
        <begin position="427"/>
        <end position="435"/>
    </location>
</feature>
<feature type="helix" evidence="5">
    <location>
        <begin position="436"/>
        <end position="439"/>
    </location>
</feature>
<feature type="strand" evidence="5">
    <location>
        <begin position="440"/>
        <end position="442"/>
    </location>
</feature>
<feature type="strand" evidence="4">
    <location>
        <begin position="444"/>
        <end position="455"/>
    </location>
</feature>
<feature type="helix" evidence="4">
    <location>
        <begin position="458"/>
        <end position="460"/>
    </location>
</feature>
<feature type="strand" evidence="4">
    <location>
        <begin position="463"/>
        <end position="473"/>
    </location>
</feature>
<feature type="turn" evidence="4">
    <location>
        <begin position="474"/>
        <end position="477"/>
    </location>
</feature>
<feature type="strand" evidence="4">
    <location>
        <begin position="478"/>
        <end position="485"/>
    </location>
</feature>
<feature type="helix" evidence="4">
    <location>
        <begin position="491"/>
        <end position="502"/>
    </location>
</feature>
<feature type="strand" evidence="4">
    <location>
        <begin position="505"/>
        <end position="508"/>
    </location>
</feature>
<feature type="strand" evidence="4">
    <location>
        <begin position="520"/>
        <end position="523"/>
    </location>
</feature>
<feature type="strand" evidence="4">
    <location>
        <begin position="528"/>
        <end position="539"/>
    </location>
</feature>
<feature type="turn" evidence="4">
    <location>
        <begin position="544"/>
        <end position="548"/>
    </location>
</feature>
<feature type="strand" evidence="4">
    <location>
        <begin position="554"/>
        <end position="559"/>
    </location>
</feature>
<feature type="strand" evidence="4">
    <location>
        <begin position="561"/>
        <end position="565"/>
    </location>
</feature>
<feature type="helix" evidence="4">
    <location>
        <begin position="571"/>
        <end position="573"/>
    </location>
</feature>
<feature type="helix" evidence="4">
    <location>
        <begin position="577"/>
        <end position="586"/>
    </location>
</feature>
<name>DNLI_SACS2</name>
<reference key="1">
    <citation type="journal article" date="2001" name="Proc. Natl. Acad. Sci. U.S.A.">
        <title>The complete genome of the crenarchaeon Sulfolobus solfataricus P2.</title>
        <authorList>
            <person name="She Q."/>
            <person name="Singh R.K."/>
            <person name="Confalonieri F."/>
            <person name="Zivanovic Y."/>
            <person name="Allard G."/>
            <person name="Awayez M.J."/>
            <person name="Chan-Weiher C.C.-Y."/>
            <person name="Clausen I.G."/>
            <person name="Curtis B.A."/>
            <person name="De Moors A."/>
            <person name="Erauso G."/>
            <person name="Fletcher C."/>
            <person name="Gordon P.M.K."/>
            <person name="Heikamp-de Jong I."/>
            <person name="Jeffries A.C."/>
            <person name="Kozera C.J."/>
            <person name="Medina N."/>
            <person name="Peng X."/>
            <person name="Thi-Ngoc H.P."/>
            <person name="Redder P."/>
            <person name="Schenk M.E."/>
            <person name="Theriault C."/>
            <person name="Tolstrup N."/>
            <person name="Charlebois R.L."/>
            <person name="Doolittle W.F."/>
            <person name="Duguet M."/>
            <person name="Gaasterland T."/>
            <person name="Garrett R.A."/>
            <person name="Ragan M.A."/>
            <person name="Sensen C.W."/>
            <person name="Van der Oost J."/>
        </authorList>
    </citation>
    <scope>NUCLEOTIDE SEQUENCE [LARGE SCALE GENOMIC DNA]</scope>
    <source>
        <strain>ATCC 35092 / DSM 1617 / JCM 11322 / P2</strain>
    </source>
</reference>
<reference key="2">
    <citation type="journal article" date="2003" name="Mol. Cell">
        <title>A heterotrimeric PCNA in the hyperthermophilic archaeon Sulfolobus solfataricus.</title>
        <authorList>
            <person name="Dionne I."/>
            <person name="Nookala R.K."/>
            <person name="Jackson S.P."/>
            <person name="Doherty A.J."/>
            <person name="Bell S.D."/>
        </authorList>
    </citation>
    <scope>FUNCTION</scope>
    <scope>ACTIVITY REGULATION</scope>
    <scope>INTERACTION WITH PCNA3</scope>
    <scope>SUBUNIT</scope>
    <scope>MUTAGENESIS OF 1-MET--LEU-30</scope>
</reference>
<reference key="3">
    <citation type="journal article" date="2006" name="Mol. Cell">
        <title>A flexible interface between DNA ligase and PCNA supports conformational switching and efficient ligation of DNA.</title>
        <authorList>
            <person name="Pascal J.M."/>
            <person name="Tsodikov O.V."/>
            <person name="Hura G.L."/>
            <person name="Song W."/>
            <person name="Cotner E.A."/>
            <person name="Classen S."/>
            <person name="Tomkinson A.E."/>
            <person name="Tainer J.A."/>
            <person name="Ellenberger T."/>
        </authorList>
    </citation>
    <scope>X-RAY CRYSTALLOGRAPHY (2.05 ANGSTROMS) IN COMPLEXES WITH ATP AND PCNA</scope>
    <scope>PARTIAL PROTEIN SEQUENCE</scope>
    <scope>SUBUNIT</scope>
    <scope>MUTAGENESIS OF 110-PHE-LEU-111</scope>
    <scope>COFACTOR</scope>
</reference>